<proteinExistence type="evidence at transcript level"/>
<feature type="chain" id="PRO_0000111516" description="Auxin response factor 12">
    <location>
        <begin position="1"/>
        <end position="593"/>
    </location>
</feature>
<feature type="domain" description="PB1" evidence="3">
    <location>
        <begin position="511"/>
        <end position="592"/>
    </location>
</feature>
<feature type="DNA-binding region" description="TF-B3" evidence="2">
    <location>
        <begin position="126"/>
        <end position="228"/>
    </location>
</feature>
<organism>
    <name type="scientific">Arabidopsis thaliana</name>
    <name type="common">Mouse-ear cress</name>
    <dbReference type="NCBI Taxonomy" id="3702"/>
    <lineage>
        <taxon>Eukaryota</taxon>
        <taxon>Viridiplantae</taxon>
        <taxon>Streptophyta</taxon>
        <taxon>Embryophyta</taxon>
        <taxon>Tracheophyta</taxon>
        <taxon>Spermatophyta</taxon>
        <taxon>Magnoliopsida</taxon>
        <taxon>eudicotyledons</taxon>
        <taxon>Gunneridae</taxon>
        <taxon>Pentapetalae</taxon>
        <taxon>rosids</taxon>
        <taxon>malvids</taxon>
        <taxon>Brassicales</taxon>
        <taxon>Brassicaceae</taxon>
        <taxon>Camelineae</taxon>
        <taxon>Arabidopsis</taxon>
    </lineage>
</organism>
<comment type="function">
    <text evidence="4">Auxin response factors (ARFs) are transcriptional factors that bind specifically to the DNA sequence 5'-TGTCTC-3' found in the auxin-responsive promoter elements (AuxREs). Could act as transcriptional activator or repressor. Formation of heterodimers with Aux/IAA proteins may alter their ability to modulate early auxin response genes expression.</text>
</comment>
<comment type="subunit">
    <text evidence="1">Homodimers and heterodimers.</text>
</comment>
<comment type="subcellular location">
    <subcellularLocation>
        <location>Nucleus</location>
    </subcellularLocation>
</comment>
<comment type="domain">
    <text>Interactions between auxin response factors (ARFs) and Aux/IAA proteins occur through their C-terminal dimerization domains III and IV.</text>
</comment>
<comment type="similarity">
    <text evidence="5">Belongs to the ARF family.</text>
</comment>
<comment type="sequence caution" evidence="5">
    <conflict type="erroneous gene model prediction">
        <sequence resource="EMBL-CDS" id="AAD39615"/>
    </conflict>
</comment>
<reference key="1">
    <citation type="journal article" date="2005" name="Plant Cell">
        <title>Functional genomic analysis of the AUXIN RESPONSE FACTOR gene family members in Arabidopsis thaliana: unique and overlapping functions of ARF7 and ARF19.</title>
        <authorList>
            <person name="Okushima Y."/>
            <person name="Overvoorde P.J."/>
            <person name="Arima K."/>
            <person name="Alonso J.M."/>
            <person name="Chan A."/>
            <person name="Chang C."/>
            <person name="Ecker J.R."/>
            <person name="Hughes B."/>
            <person name="Lui A."/>
            <person name="Nguyen D."/>
            <person name="Onodera C."/>
            <person name="Quach H."/>
            <person name="Smith A."/>
            <person name="Yu G."/>
            <person name="Theologis A."/>
        </authorList>
    </citation>
    <scope>NUCLEOTIDE SEQUENCE [MRNA]</scope>
    <source>
        <strain>cv. Columbia</strain>
    </source>
</reference>
<reference key="2">
    <citation type="journal article" date="2000" name="Nature">
        <title>Sequence and analysis of chromosome 1 of the plant Arabidopsis thaliana.</title>
        <authorList>
            <person name="Theologis A."/>
            <person name="Ecker J.R."/>
            <person name="Palm C.J."/>
            <person name="Federspiel N.A."/>
            <person name="Kaul S."/>
            <person name="White O."/>
            <person name="Alonso J."/>
            <person name="Altafi H."/>
            <person name="Araujo R."/>
            <person name="Bowman C.L."/>
            <person name="Brooks S.Y."/>
            <person name="Buehler E."/>
            <person name="Chan A."/>
            <person name="Chao Q."/>
            <person name="Chen H."/>
            <person name="Cheuk R.F."/>
            <person name="Chin C.W."/>
            <person name="Chung M.K."/>
            <person name="Conn L."/>
            <person name="Conway A.B."/>
            <person name="Conway A.R."/>
            <person name="Creasy T.H."/>
            <person name="Dewar K."/>
            <person name="Dunn P."/>
            <person name="Etgu P."/>
            <person name="Feldblyum T.V."/>
            <person name="Feng J.-D."/>
            <person name="Fong B."/>
            <person name="Fujii C.Y."/>
            <person name="Gill J.E."/>
            <person name="Goldsmith A.D."/>
            <person name="Haas B."/>
            <person name="Hansen N.F."/>
            <person name="Hughes B."/>
            <person name="Huizar L."/>
            <person name="Hunter J.L."/>
            <person name="Jenkins J."/>
            <person name="Johnson-Hopson C."/>
            <person name="Khan S."/>
            <person name="Khaykin E."/>
            <person name="Kim C.J."/>
            <person name="Koo H.L."/>
            <person name="Kremenetskaia I."/>
            <person name="Kurtz D.B."/>
            <person name="Kwan A."/>
            <person name="Lam B."/>
            <person name="Langin-Hooper S."/>
            <person name="Lee A."/>
            <person name="Lee J.M."/>
            <person name="Lenz C.A."/>
            <person name="Li J.H."/>
            <person name="Li Y.-P."/>
            <person name="Lin X."/>
            <person name="Liu S.X."/>
            <person name="Liu Z.A."/>
            <person name="Luros J.S."/>
            <person name="Maiti R."/>
            <person name="Marziali A."/>
            <person name="Militscher J."/>
            <person name="Miranda M."/>
            <person name="Nguyen M."/>
            <person name="Nierman W.C."/>
            <person name="Osborne B.I."/>
            <person name="Pai G."/>
            <person name="Peterson J."/>
            <person name="Pham P.K."/>
            <person name="Rizzo M."/>
            <person name="Rooney T."/>
            <person name="Rowley D."/>
            <person name="Sakano H."/>
            <person name="Salzberg S.L."/>
            <person name="Schwartz J.R."/>
            <person name="Shinn P."/>
            <person name="Southwick A.M."/>
            <person name="Sun H."/>
            <person name="Tallon L.J."/>
            <person name="Tambunga G."/>
            <person name="Toriumi M.J."/>
            <person name="Town C.D."/>
            <person name="Utterback T."/>
            <person name="Van Aken S."/>
            <person name="Vaysberg M."/>
            <person name="Vysotskaia V.S."/>
            <person name="Walker M."/>
            <person name="Wu D."/>
            <person name="Yu G."/>
            <person name="Fraser C.M."/>
            <person name="Venter J.C."/>
            <person name="Davis R.W."/>
        </authorList>
    </citation>
    <scope>NUCLEOTIDE SEQUENCE [LARGE SCALE GENOMIC DNA]</scope>
    <source>
        <strain>cv. Columbia</strain>
    </source>
</reference>
<reference key="3">
    <citation type="journal article" date="2017" name="Plant J.">
        <title>Araport11: a complete reannotation of the Arabidopsis thaliana reference genome.</title>
        <authorList>
            <person name="Cheng C.Y."/>
            <person name="Krishnakumar V."/>
            <person name="Chan A.P."/>
            <person name="Thibaud-Nissen F."/>
            <person name="Schobel S."/>
            <person name="Town C.D."/>
        </authorList>
    </citation>
    <scope>GENOME REANNOTATION</scope>
    <source>
        <strain>cv. Columbia</strain>
    </source>
</reference>
<reference key="4">
    <citation type="journal article" date="2002" name="Plant Mol. Biol.">
        <title>Auxin-responsive gene expression: genes, promoters and regulatory factors.</title>
        <authorList>
            <person name="Hagen G."/>
            <person name="Guilfoyle T.J."/>
        </authorList>
    </citation>
    <scope>GENE FAMILY</scope>
    <scope>NOMENCLATURE</scope>
    <scope>FUNCTION</scope>
</reference>
<reference key="5">
    <citation type="journal article" date="2008" name="Trends Plant Sci.">
        <title>The plant B3 superfamily.</title>
        <authorList>
            <person name="Swaminathan K."/>
            <person name="Peterson K."/>
            <person name="Jack T."/>
        </authorList>
    </citation>
    <scope>GENE FAMILY</scope>
</reference>
<accession>Q9XID4</accession>
<accession>Q5IRX5</accession>
<keyword id="KW-0927">Auxin signaling pathway</keyword>
<keyword id="KW-0238">DNA-binding</keyword>
<keyword id="KW-0539">Nucleus</keyword>
<keyword id="KW-1185">Reference proteome</keyword>
<keyword id="KW-0804">Transcription</keyword>
<keyword id="KW-0805">Transcription regulation</keyword>
<dbReference type="EMBL" id="AY669792">
    <property type="protein sequence ID" value="AAT67076.1"/>
    <property type="molecule type" value="mRNA"/>
</dbReference>
<dbReference type="EMBL" id="AC007454">
    <property type="protein sequence ID" value="AAD39615.1"/>
    <property type="status" value="ALT_SEQ"/>
    <property type="molecule type" value="Genomic_DNA"/>
</dbReference>
<dbReference type="EMBL" id="CP002684">
    <property type="protein sequence ID" value="AEE31695.1"/>
    <property type="molecule type" value="Genomic_DNA"/>
</dbReference>
<dbReference type="PIR" id="C86467">
    <property type="entry name" value="C86467"/>
</dbReference>
<dbReference type="RefSeq" id="NP_174691.2">
    <property type="nucleotide sequence ID" value="NM_103153.2"/>
</dbReference>
<dbReference type="SMR" id="Q9XID4"/>
<dbReference type="BioGRID" id="25563">
    <property type="interactions" value="9"/>
</dbReference>
<dbReference type="FunCoup" id="Q9XID4">
    <property type="interactions" value="289"/>
</dbReference>
<dbReference type="IntAct" id="Q9XID4">
    <property type="interactions" value="12"/>
</dbReference>
<dbReference type="STRING" id="3702.Q9XID4"/>
<dbReference type="PaxDb" id="3702-AT1G34310.1"/>
<dbReference type="EnsemblPlants" id="AT1G34310.1">
    <property type="protein sequence ID" value="AT1G34310.1"/>
    <property type="gene ID" value="AT1G34310"/>
</dbReference>
<dbReference type="GeneID" id="840331"/>
<dbReference type="Gramene" id="AT1G34310.1">
    <property type="protein sequence ID" value="AT1G34310.1"/>
    <property type="gene ID" value="AT1G34310"/>
</dbReference>
<dbReference type="KEGG" id="ath:AT1G34310"/>
<dbReference type="Araport" id="AT1G34310"/>
<dbReference type="TAIR" id="AT1G34310">
    <property type="gene designation" value="ARF12"/>
</dbReference>
<dbReference type="eggNOG" id="ENOG502QTME">
    <property type="taxonomic scope" value="Eukaryota"/>
</dbReference>
<dbReference type="HOGENOM" id="CLU_002626_4_4_1"/>
<dbReference type="InParanoid" id="Q9XID4"/>
<dbReference type="OMA" id="YNERMVQ"/>
<dbReference type="PhylomeDB" id="Q9XID4"/>
<dbReference type="PRO" id="PR:Q9XID4"/>
<dbReference type="Proteomes" id="UP000006548">
    <property type="component" value="Chromosome 1"/>
</dbReference>
<dbReference type="ExpressionAtlas" id="Q9XID4">
    <property type="expression patterns" value="baseline and differential"/>
</dbReference>
<dbReference type="GO" id="GO:0005634">
    <property type="term" value="C:nucleus"/>
    <property type="evidence" value="ECO:0007669"/>
    <property type="project" value="UniProtKB-SubCell"/>
</dbReference>
<dbReference type="GO" id="GO:0003700">
    <property type="term" value="F:DNA-binding transcription factor activity"/>
    <property type="evidence" value="ECO:0000250"/>
    <property type="project" value="TAIR"/>
</dbReference>
<dbReference type="GO" id="GO:0000976">
    <property type="term" value="F:transcription cis-regulatory region binding"/>
    <property type="evidence" value="ECO:0000353"/>
    <property type="project" value="TAIR"/>
</dbReference>
<dbReference type="GO" id="GO:0009734">
    <property type="term" value="P:auxin-activated signaling pathway"/>
    <property type="evidence" value="ECO:0007669"/>
    <property type="project" value="UniProtKB-KW"/>
</dbReference>
<dbReference type="CDD" id="cd10017">
    <property type="entry name" value="B3_DNA"/>
    <property type="match status" value="1"/>
</dbReference>
<dbReference type="FunFam" id="2.30.30.1040:FF:000001">
    <property type="entry name" value="Auxin response factor"/>
    <property type="match status" value="1"/>
</dbReference>
<dbReference type="FunFam" id="2.40.330.10:FF:000001">
    <property type="entry name" value="Auxin response factor"/>
    <property type="match status" value="1"/>
</dbReference>
<dbReference type="Gene3D" id="2.30.30.1040">
    <property type="match status" value="1"/>
</dbReference>
<dbReference type="Gene3D" id="2.40.330.10">
    <property type="entry name" value="DNA-binding pseudobarrel domain"/>
    <property type="match status" value="1"/>
</dbReference>
<dbReference type="Gene3D" id="3.10.20.90">
    <property type="entry name" value="Phosphatidylinositol 3-kinase Catalytic Subunit, Chain A, domain 1"/>
    <property type="match status" value="1"/>
</dbReference>
<dbReference type="InterPro" id="IPR010525">
    <property type="entry name" value="ARF_dom"/>
</dbReference>
<dbReference type="InterPro" id="IPR044835">
    <property type="entry name" value="ARF_plant"/>
</dbReference>
<dbReference type="InterPro" id="IPR033389">
    <property type="entry name" value="AUX/IAA_dom"/>
</dbReference>
<dbReference type="InterPro" id="IPR003340">
    <property type="entry name" value="B3_DNA-bd"/>
</dbReference>
<dbReference type="InterPro" id="IPR015300">
    <property type="entry name" value="DNA-bd_pseudobarrel_sf"/>
</dbReference>
<dbReference type="InterPro" id="IPR053793">
    <property type="entry name" value="PB1-like"/>
</dbReference>
<dbReference type="PANTHER" id="PTHR31384:SF164">
    <property type="entry name" value="AUXIN RESPONSE FACTOR 12-RELATED"/>
    <property type="match status" value="1"/>
</dbReference>
<dbReference type="PANTHER" id="PTHR31384">
    <property type="entry name" value="AUXIN RESPONSE FACTOR 4-RELATED"/>
    <property type="match status" value="1"/>
</dbReference>
<dbReference type="Pfam" id="PF06507">
    <property type="entry name" value="ARF_AD"/>
    <property type="match status" value="1"/>
</dbReference>
<dbReference type="Pfam" id="PF02309">
    <property type="entry name" value="AUX_IAA"/>
    <property type="match status" value="1"/>
</dbReference>
<dbReference type="Pfam" id="PF02362">
    <property type="entry name" value="B3"/>
    <property type="match status" value="1"/>
</dbReference>
<dbReference type="SMART" id="SM01019">
    <property type="entry name" value="B3"/>
    <property type="match status" value="1"/>
</dbReference>
<dbReference type="SUPFAM" id="SSF54277">
    <property type="entry name" value="CAD &amp; PB1 domains"/>
    <property type="match status" value="1"/>
</dbReference>
<dbReference type="SUPFAM" id="SSF101936">
    <property type="entry name" value="DNA-binding pseudobarrel domain"/>
    <property type="match status" value="1"/>
</dbReference>
<dbReference type="PROSITE" id="PS50863">
    <property type="entry name" value="B3"/>
    <property type="match status" value="1"/>
</dbReference>
<dbReference type="PROSITE" id="PS51745">
    <property type="entry name" value="PB1"/>
    <property type="match status" value="1"/>
</dbReference>
<protein>
    <recommendedName>
        <fullName>Auxin response factor 12</fullName>
    </recommendedName>
</protein>
<gene>
    <name type="primary">ARF12</name>
    <name type="ordered locus">At1g34310</name>
    <name type="ORF">F23M19.4</name>
</gene>
<sequence length="593" mass="67218">MESGNVVNAQPELSGIIDGSKSYVYEQLWKLCAGPLCDIPKLGEKVYYFPQGHIELVETSTREELNELQPICDLPSKLQCRVIAIHLKVENNSDETYAEITLMPDTTQVVIPTQNENQFRPLVNSFTKVLTASDTSAHGGFFVPKKHAIECLPSLDMSQPLPAQELLAIDLHGNQWRFNHNYRGTPQRHLLTTGWNAFTTSKKLVAGDVIVFVRGETGELRVGIRRARHQQGNIPSSIVSIDCMRHGVVASAKHAFDNQCMFTVVYKPRSSKFIVSYDKFLDAVNNKFNVGSRFTMRLEGDDFSERRCFGTIIGVSDFSPHWKCSEWRSLEVQWDEFTSFPGPKKVSPWDIEHLMPAINVPRSFLLKNKRLREVNEIGSSSSHLLPPILTQGQENEQLSVASPMNISLRYRDATEDAMNPSKLLMSYPVQPMPKLNYNNQMVTEMEENITTKTGTNFRLFGVTLDTPPVIKDPIEEIGSEISKLTEGKKFGLSQTLRSPTEIQNKQFSSSRTCTKVQMQGVTIGRAVDLSVLNGYDQLILELEKLFDIKGQLQTRNQWEIAFTDSDEDKMLVGDDPWPEFCNMVKKIFIQKRR</sequence>
<name>ARFL_ARATH</name>
<evidence type="ECO:0000250" key="1"/>
<evidence type="ECO:0000255" key="2">
    <source>
        <dbReference type="PROSITE-ProRule" id="PRU00326"/>
    </source>
</evidence>
<evidence type="ECO:0000255" key="3">
    <source>
        <dbReference type="PROSITE-ProRule" id="PRU01081"/>
    </source>
</evidence>
<evidence type="ECO:0000269" key="4">
    <source>
    </source>
</evidence>
<evidence type="ECO:0000305" key="5"/>